<gene>
    <name type="primary">pex19</name>
    <name type="ORF">DDB_G0274873</name>
</gene>
<keyword id="KW-0576">Peroxisome</keyword>
<keyword id="KW-1185">Reference proteome</keyword>
<comment type="subcellular location">
    <subcellularLocation>
        <location evidence="2">Peroxisome</location>
    </subcellularLocation>
</comment>
<comment type="similarity">
    <text evidence="2">Belongs to the peroxin-19 family.</text>
</comment>
<reference key="1">
    <citation type="journal article" date="2002" name="Nature">
        <title>Sequence and analysis of chromosome 2 of Dictyostelium discoideum.</title>
        <authorList>
            <person name="Gloeckner G."/>
            <person name="Eichinger L."/>
            <person name="Szafranski K."/>
            <person name="Pachebat J.A."/>
            <person name="Bankier A.T."/>
            <person name="Dear P.H."/>
            <person name="Lehmann R."/>
            <person name="Baumgart C."/>
            <person name="Parra G."/>
            <person name="Abril J.F."/>
            <person name="Guigo R."/>
            <person name="Kumpf K."/>
            <person name="Tunggal B."/>
            <person name="Cox E.C."/>
            <person name="Quail M.A."/>
            <person name="Platzer M."/>
            <person name="Rosenthal A."/>
            <person name="Noegel A.A."/>
        </authorList>
    </citation>
    <scope>NUCLEOTIDE SEQUENCE [LARGE SCALE GENOMIC DNA]</scope>
    <source>
        <strain>AX4</strain>
    </source>
</reference>
<reference key="2">
    <citation type="journal article" date="2005" name="Nature">
        <title>The genome of the social amoeba Dictyostelium discoideum.</title>
        <authorList>
            <person name="Eichinger L."/>
            <person name="Pachebat J.A."/>
            <person name="Gloeckner G."/>
            <person name="Rajandream M.A."/>
            <person name="Sucgang R."/>
            <person name="Berriman M."/>
            <person name="Song J."/>
            <person name="Olsen R."/>
            <person name="Szafranski K."/>
            <person name="Xu Q."/>
            <person name="Tunggal B."/>
            <person name="Kummerfeld S."/>
            <person name="Madera M."/>
            <person name="Konfortov B.A."/>
            <person name="Rivero F."/>
            <person name="Bankier A.T."/>
            <person name="Lehmann R."/>
            <person name="Hamlin N."/>
            <person name="Davies R."/>
            <person name="Gaudet P."/>
            <person name="Fey P."/>
            <person name="Pilcher K."/>
            <person name="Chen G."/>
            <person name="Saunders D."/>
            <person name="Sodergren E.J."/>
            <person name="Davis P."/>
            <person name="Kerhornou A."/>
            <person name="Nie X."/>
            <person name="Hall N."/>
            <person name="Anjard C."/>
            <person name="Hemphill L."/>
            <person name="Bason N."/>
            <person name="Farbrother P."/>
            <person name="Desany B."/>
            <person name="Just E."/>
            <person name="Morio T."/>
            <person name="Rost R."/>
            <person name="Churcher C.M."/>
            <person name="Cooper J."/>
            <person name="Haydock S."/>
            <person name="van Driessche N."/>
            <person name="Cronin A."/>
            <person name="Goodhead I."/>
            <person name="Muzny D.M."/>
            <person name="Mourier T."/>
            <person name="Pain A."/>
            <person name="Lu M."/>
            <person name="Harper D."/>
            <person name="Lindsay R."/>
            <person name="Hauser H."/>
            <person name="James K.D."/>
            <person name="Quiles M."/>
            <person name="Madan Babu M."/>
            <person name="Saito T."/>
            <person name="Buchrieser C."/>
            <person name="Wardroper A."/>
            <person name="Felder M."/>
            <person name="Thangavelu M."/>
            <person name="Johnson D."/>
            <person name="Knights A."/>
            <person name="Loulseged H."/>
            <person name="Mungall K.L."/>
            <person name="Oliver K."/>
            <person name="Price C."/>
            <person name="Quail M.A."/>
            <person name="Urushihara H."/>
            <person name="Hernandez J."/>
            <person name="Rabbinowitsch E."/>
            <person name="Steffen D."/>
            <person name="Sanders M."/>
            <person name="Ma J."/>
            <person name="Kohara Y."/>
            <person name="Sharp S."/>
            <person name="Simmonds M.N."/>
            <person name="Spiegler S."/>
            <person name="Tivey A."/>
            <person name="Sugano S."/>
            <person name="White B."/>
            <person name="Walker D."/>
            <person name="Woodward J.R."/>
            <person name="Winckler T."/>
            <person name="Tanaka Y."/>
            <person name="Shaulsky G."/>
            <person name="Schleicher M."/>
            <person name="Weinstock G.M."/>
            <person name="Rosenthal A."/>
            <person name="Cox E.C."/>
            <person name="Chisholm R.L."/>
            <person name="Gibbs R.A."/>
            <person name="Loomis W.F."/>
            <person name="Platzer M."/>
            <person name="Kay R.R."/>
            <person name="Williams J.G."/>
            <person name="Dear P.H."/>
            <person name="Noegel A.A."/>
            <person name="Barrell B.G."/>
            <person name="Kuspa A."/>
        </authorList>
    </citation>
    <scope>NUCLEOTIDE SEQUENCE [LARGE SCALE GENOMIC DNA]</scope>
    <source>
        <strain>AX4</strain>
    </source>
</reference>
<name>PEX19_DICDI</name>
<protein>
    <recommendedName>
        <fullName>Putative peroxisomal biogenesis factor 19</fullName>
    </recommendedName>
    <alternativeName>
        <fullName>Peroxin-19</fullName>
    </alternativeName>
</protein>
<organism>
    <name type="scientific">Dictyostelium discoideum</name>
    <name type="common">Social amoeba</name>
    <dbReference type="NCBI Taxonomy" id="44689"/>
    <lineage>
        <taxon>Eukaryota</taxon>
        <taxon>Amoebozoa</taxon>
        <taxon>Evosea</taxon>
        <taxon>Eumycetozoa</taxon>
        <taxon>Dictyostelia</taxon>
        <taxon>Dictyosteliales</taxon>
        <taxon>Dictyosteliaceae</taxon>
        <taxon>Dictyostelium</taxon>
    </lineage>
</organism>
<evidence type="ECO:0000256" key="1">
    <source>
        <dbReference type="SAM" id="MobiDB-lite"/>
    </source>
</evidence>
<evidence type="ECO:0000305" key="2"/>
<feature type="chain" id="PRO_0000356188" description="Putative peroxisomal biogenesis factor 19">
    <location>
        <begin position="1"/>
        <end position="335"/>
    </location>
</feature>
<feature type="region of interest" description="Disordered" evidence="1">
    <location>
        <begin position="14"/>
        <end position="70"/>
    </location>
</feature>
<feature type="region of interest" description="Disordered" evidence="1">
    <location>
        <begin position="104"/>
        <end position="124"/>
    </location>
</feature>
<feature type="compositionally biased region" description="Low complexity" evidence="1">
    <location>
        <begin position="22"/>
        <end position="55"/>
    </location>
</feature>
<feature type="compositionally biased region" description="Low complexity" evidence="1">
    <location>
        <begin position="109"/>
        <end position="119"/>
    </location>
</feature>
<dbReference type="EMBL" id="AAFI02000012">
    <property type="protein sequence ID" value="EAL70329.1"/>
    <property type="molecule type" value="Genomic_DNA"/>
</dbReference>
<dbReference type="RefSeq" id="XP_644089.1">
    <property type="nucleotide sequence ID" value="XM_638997.1"/>
</dbReference>
<dbReference type="SMR" id="Q555I0"/>
<dbReference type="FunCoup" id="Q555I0">
    <property type="interactions" value="49"/>
</dbReference>
<dbReference type="STRING" id="44689.Q555I0"/>
<dbReference type="PaxDb" id="44689-DDB0238080"/>
<dbReference type="EnsemblProtists" id="EAL70329">
    <property type="protein sequence ID" value="EAL70329"/>
    <property type="gene ID" value="DDB_G0274873"/>
</dbReference>
<dbReference type="GeneID" id="8619518"/>
<dbReference type="KEGG" id="ddi:DDB_G0274873"/>
<dbReference type="dictyBase" id="DDB_G0274873">
    <property type="gene designation" value="pex19"/>
</dbReference>
<dbReference type="VEuPathDB" id="AmoebaDB:DDB_G0274873"/>
<dbReference type="eggNOG" id="ENOG502RHD2">
    <property type="taxonomic scope" value="Eukaryota"/>
</dbReference>
<dbReference type="HOGENOM" id="CLU_830084_0_0_1"/>
<dbReference type="InParanoid" id="Q555I0"/>
<dbReference type="OMA" id="KEIFANQ"/>
<dbReference type="Reactome" id="R-DDI-1369062">
    <property type="pathway name" value="ABC transporters in lipid homeostasis"/>
</dbReference>
<dbReference type="Reactome" id="R-DDI-9603798">
    <property type="pathway name" value="Class I peroxisomal membrane protein import"/>
</dbReference>
<dbReference type="PRO" id="PR:Q555I0"/>
<dbReference type="Proteomes" id="UP000002195">
    <property type="component" value="Chromosome 2"/>
</dbReference>
<dbReference type="GO" id="GO:0005778">
    <property type="term" value="C:peroxisomal membrane"/>
    <property type="evidence" value="ECO:0000250"/>
    <property type="project" value="dictyBase"/>
</dbReference>
<dbReference type="GO" id="GO:0033328">
    <property type="term" value="F:peroxisome membrane targeting sequence binding"/>
    <property type="evidence" value="ECO:0000318"/>
    <property type="project" value="GO_Central"/>
</dbReference>
<dbReference type="GO" id="GO:0045046">
    <property type="term" value="P:protein import into peroxisome membrane"/>
    <property type="evidence" value="ECO:0000318"/>
    <property type="project" value="GO_Central"/>
</dbReference>
<dbReference type="GO" id="GO:0006625">
    <property type="term" value="P:protein targeting to peroxisome"/>
    <property type="evidence" value="ECO:0000250"/>
    <property type="project" value="dictyBase"/>
</dbReference>
<dbReference type="Gene3D" id="1.20.120.900">
    <property type="entry name" value="Pex19, mPTS binding domain"/>
    <property type="match status" value="1"/>
</dbReference>
<dbReference type="InterPro" id="IPR006708">
    <property type="entry name" value="Pex19"/>
</dbReference>
<dbReference type="InterPro" id="IPR038322">
    <property type="entry name" value="Pex19_C_sf"/>
</dbReference>
<dbReference type="PANTHER" id="PTHR12774">
    <property type="entry name" value="PEROXISOMAL BIOGENESIS FACTOR 19"/>
    <property type="match status" value="1"/>
</dbReference>
<dbReference type="PANTHER" id="PTHR12774:SF2">
    <property type="entry name" value="PEROXISOMAL BIOGENESIS FACTOR 19"/>
    <property type="match status" value="1"/>
</dbReference>
<dbReference type="Pfam" id="PF04614">
    <property type="entry name" value="Pex19"/>
    <property type="match status" value="1"/>
</dbReference>
<proteinExistence type="inferred from homology"/>
<sequence>MNLDDLLNSALDELETQEKEQPTTTKTTTTTTTTTTSNTTKTINNNNNTVTPSTIKPTYNKPPPPSLGNDDLLNTNVNDMMDIFKKLLGEETLKNLDAGFDKEYNKDINNNSDDSNNGGLPSEEDKKKIDELAEKLATMFGVSEDSDLGDMDNFKPFLEELTKAGGLNFNNDELNNNSNNNNKNNNNSGVHIDNFESSISDTLKNLADNASNKTDNNGGIDDLFSNLSKLMEGQNFNLDGEETGQINDLFEESIQFMAENYPDWIEKNIDHYPPEETERFKNQSEIFSMIAQQKEGEADMLDSGLLARMSQLGNLPDSFCEDSIKKVETEIDEKE</sequence>
<accession>Q555I0</accession>